<organismHost>
    <name type="scientific">Bos taurus</name>
    <name type="common">Bovine</name>
    <dbReference type="NCBI Taxonomy" id="9913"/>
</organismHost>
<keyword id="KW-0244">Early protein</keyword>
<keyword id="KW-1185">Reference proteome</keyword>
<comment type="miscellaneous">
    <text>Encodes a truncated version of the E3 ubiquitin ligase p28 protein present in variola virus. Lacks the C-terminal region containing the RING-type zinc-finger. The absence of RING-type zinc-finger in several attenuated vaccinia strains, demonstrates the importance of this domain in virulence.</text>
</comment>
<evidence type="ECO:0000255" key="1">
    <source>
        <dbReference type="PROSITE-ProRule" id="PRU00631"/>
    </source>
</evidence>
<evidence type="ECO:0000305" key="2"/>
<feature type="chain" id="PRO_0000099742" description="Truncated p28 protein">
    <location>
        <begin position="1"/>
        <end position="184"/>
    </location>
</feature>
<feature type="domain" description="KilA-N" evidence="1">
    <location>
        <begin position="21"/>
        <end position="131"/>
    </location>
</feature>
<feature type="sequence conflict" description="In Ref. 2; AAO89290." evidence="2" ref="2">
    <location>
        <begin position="141"/>
        <end position="143"/>
    </location>
</feature>
<sequence length="184" mass="21604">MEFDPAKINTSSIDHVTILQYIDEPNDIRLTVCIIRNINNITYYINITKINTHLANQFRAWKKRIAGRDYMTNLSRDTGIQQSKLTETIRNCQKNRNIYGLYIHYNLVINVVIDWITDVIVQSILRGLVNWYIANNTYTPNTPNNTTTISELDIIKILDKYEDVYRVSKEKECGICYEVVYSKR</sequence>
<reference key="1">
    <citation type="journal article" date="1988" name="Virology">
        <title>Analysis of a large cluster of nonessential genes deleted from a vaccinia virus terminal transposition mutant.</title>
        <authorList>
            <person name="Kotwal G.J."/>
            <person name="Moss B."/>
        </authorList>
    </citation>
    <scope>NUCLEOTIDE SEQUENCE [GENOMIC DNA]</scope>
</reference>
<reference key="2">
    <citation type="submission" date="2003-02" db="EMBL/GenBank/DDBJ databases">
        <title>Sequencing of the coding region of Vaccinia-WR to an average 9-fold redundancy and an error rate of 0.16/10kb.</title>
        <authorList>
            <person name="Esposito J.J."/>
            <person name="Frace A.M."/>
            <person name="Sammons S.A."/>
            <person name="Olsen-Rasmussen M."/>
            <person name="Osborne J."/>
            <person name="Wohlhueter R."/>
        </authorList>
    </citation>
    <scope>NUCLEOTIDE SEQUENCE [LARGE SCALE GENOMIC DNA]</scope>
</reference>
<dbReference type="EMBL" id="M22812">
    <property type="protein sequence ID" value="AAA69592.1"/>
    <property type="molecule type" value="Genomic_DNA"/>
</dbReference>
<dbReference type="EMBL" id="AY243312">
    <property type="protein sequence ID" value="AAO89290.1"/>
    <property type="molecule type" value="Genomic_DNA"/>
</dbReference>
<dbReference type="EMBL" id="AY243312">
    <property type="protein sequence ID" value="AAO89487.1"/>
    <property type="molecule type" value="Genomic_DNA"/>
</dbReference>
<dbReference type="PIR" id="A31829">
    <property type="entry name" value="WZVZA1"/>
</dbReference>
<dbReference type="RefSeq" id="YP_233090.1">
    <property type="nucleotide sequence ID" value="NC_006998.1"/>
</dbReference>
<dbReference type="DNASU" id="3707585"/>
<dbReference type="GeneID" id="3707585"/>
<dbReference type="KEGG" id="vg:3707585"/>
<dbReference type="KEGG" id="vg:3707626"/>
<dbReference type="Proteomes" id="UP000000344">
    <property type="component" value="Genome"/>
</dbReference>
<dbReference type="InterPro" id="IPR018004">
    <property type="entry name" value="KilA/APSES_HTH"/>
</dbReference>
<dbReference type="InterPro" id="IPR017880">
    <property type="entry name" value="KilA_N"/>
</dbReference>
<dbReference type="Pfam" id="PF04383">
    <property type="entry name" value="KilA-N"/>
    <property type="match status" value="1"/>
</dbReference>
<dbReference type="PROSITE" id="PS51301">
    <property type="entry name" value="KILA_N"/>
    <property type="match status" value="1"/>
</dbReference>
<name>P28_VACCW</name>
<organism>
    <name type="scientific">Vaccinia virus (strain Western Reserve)</name>
    <name type="common">VACV</name>
    <name type="synonym">Vaccinia virus (strain WR)</name>
    <dbReference type="NCBI Taxonomy" id="10254"/>
    <lineage>
        <taxon>Viruses</taxon>
        <taxon>Varidnaviria</taxon>
        <taxon>Bamfordvirae</taxon>
        <taxon>Nucleocytoviricota</taxon>
        <taxon>Pokkesviricetes</taxon>
        <taxon>Chitovirales</taxon>
        <taxon>Poxviridae</taxon>
        <taxon>Chordopoxvirinae</taxon>
        <taxon>Orthopoxvirus</taxon>
        <taxon>Vaccinia virus</taxon>
    </lineage>
</organism>
<proteinExistence type="predicted"/>
<protein>
    <recommendedName>
        <fullName>Truncated p28 protein</fullName>
    </recommendedName>
</protein>
<gene>
    <name type="primary">p28</name>
    <name type="ordered locus">VACWR208</name>
</gene>
<gene>
    <name type="ordered locus">VACWR011</name>
</gene>
<accession>P17366</accession>
<accession>Q76ZK0</accession>
<accession>Q80HY8</accession>